<sequence length="192" mass="20919">MPPLILASSSPYRRELLARLQLPFSVQSPNIDESPQLGEAPEHTALRLAQAKARKVAETFPNALIIGCDQVATLDGLQLGKPLTHDNAVRQLTLMRGRSVVFHSALCVYNALTQEMQADVVPYTVKFRDLSDRQIESYLQKEQPYQCAGSAKSEGLGIAIIAAMQGDDPNALIGLPLIRLIDMLASQGVDVI</sequence>
<feature type="chain" id="PRO_0000267339" description="7-methyl-GTP pyrophosphatase">
    <location>
        <begin position="1"/>
        <end position="192"/>
    </location>
</feature>
<feature type="active site" description="Proton acceptor" evidence="1">
    <location>
        <position position="69"/>
    </location>
</feature>
<feature type="site" description="Important for substrate specificity" evidence="1">
    <location>
        <position position="12"/>
    </location>
</feature>
<feature type="site" description="Important for substrate specificity" evidence="1">
    <location>
        <position position="70"/>
    </location>
</feature>
<feature type="site" description="Important for substrate specificity" evidence="1">
    <location>
        <position position="154"/>
    </location>
</feature>
<gene>
    <name type="ordered locus">Mfla_1513</name>
</gene>
<keyword id="KW-0963">Cytoplasm</keyword>
<keyword id="KW-0378">Hydrolase</keyword>
<keyword id="KW-0546">Nucleotide metabolism</keyword>
<keyword id="KW-1185">Reference proteome</keyword>
<proteinExistence type="inferred from homology"/>
<organism>
    <name type="scientific">Methylobacillus flagellatus (strain ATCC 51484 / DSM 6875 / VKM B-1610 / KT)</name>
    <dbReference type="NCBI Taxonomy" id="265072"/>
    <lineage>
        <taxon>Bacteria</taxon>
        <taxon>Pseudomonadati</taxon>
        <taxon>Pseudomonadota</taxon>
        <taxon>Betaproteobacteria</taxon>
        <taxon>Nitrosomonadales</taxon>
        <taxon>Methylophilaceae</taxon>
        <taxon>Methylobacillus</taxon>
    </lineage>
</organism>
<protein>
    <recommendedName>
        <fullName evidence="1">7-methyl-GTP pyrophosphatase</fullName>
        <shortName evidence="1">m(7)GTP pyrophosphatase</shortName>
        <ecNumber evidence="1">3.6.1.-</ecNumber>
    </recommendedName>
</protein>
<reference key="1">
    <citation type="submission" date="2006-03" db="EMBL/GenBank/DDBJ databases">
        <title>Complete sequence of Methylobacillus flagellatus KT.</title>
        <authorList>
            <consortium name="US DOE Joint Genome Institute"/>
            <person name="Copeland A."/>
            <person name="Lucas S."/>
            <person name="Lapidus A."/>
            <person name="Barry K."/>
            <person name="Detter J.C."/>
            <person name="Glavina del Rio T."/>
            <person name="Hammon N."/>
            <person name="Israni S."/>
            <person name="Dalin E."/>
            <person name="Tice H."/>
            <person name="Pitluck S."/>
            <person name="Brettin T."/>
            <person name="Bruce D."/>
            <person name="Han C."/>
            <person name="Tapia R."/>
            <person name="Saunders E."/>
            <person name="Gilna P."/>
            <person name="Schmutz J."/>
            <person name="Larimer F."/>
            <person name="Land M."/>
            <person name="Kyrpides N."/>
            <person name="Anderson I."/>
            <person name="Richardson P."/>
        </authorList>
    </citation>
    <scope>NUCLEOTIDE SEQUENCE [LARGE SCALE GENOMIC DNA]</scope>
    <source>
        <strain>ATCC 51484 / DSM 6875 / VKM B-1610 / KT</strain>
    </source>
</reference>
<dbReference type="EC" id="3.6.1.-" evidence="1"/>
<dbReference type="EMBL" id="CP000284">
    <property type="protein sequence ID" value="ABE49781.1"/>
    <property type="molecule type" value="Genomic_DNA"/>
</dbReference>
<dbReference type="RefSeq" id="WP_011479735.1">
    <property type="nucleotide sequence ID" value="NC_007947.1"/>
</dbReference>
<dbReference type="SMR" id="Q1H156"/>
<dbReference type="STRING" id="265072.Mfla_1513"/>
<dbReference type="KEGG" id="mfa:Mfla_1513"/>
<dbReference type="eggNOG" id="COG0424">
    <property type="taxonomic scope" value="Bacteria"/>
</dbReference>
<dbReference type="HOGENOM" id="CLU_040416_1_0_4"/>
<dbReference type="OrthoDB" id="9813694at2"/>
<dbReference type="Proteomes" id="UP000002440">
    <property type="component" value="Chromosome"/>
</dbReference>
<dbReference type="GO" id="GO:0005737">
    <property type="term" value="C:cytoplasm"/>
    <property type="evidence" value="ECO:0007669"/>
    <property type="project" value="UniProtKB-SubCell"/>
</dbReference>
<dbReference type="GO" id="GO:0047429">
    <property type="term" value="F:nucleoside triphosphate diphosphatase activity"/>
    <property type="evidence" value="ECO:0007669"/>
    <property type="project" value="InterPro"/>
</dbReference>
<dbReference type="GO" id="GO:0009117">
    <property type="term" value="P:nucleotide metabolic process"/>
    <property type="evidence" value="ECO:0007669"/>
    <property type="project" value="UniProtKB-KW"/>
</dbReference>
<dbReference type="CDD" id="cd00555">
    <property type="entry name" value="Maf"/>
    <property type="match status" value="1"/>
</dbReference>
<dbReference type="FunFam" id="3.90.950.10:FF:000005">
    <property type="entry name" value="7-methyl-GTP pyrophosphatase"/>
    <property type="match status" value="1"/>
</dbReference>
<dbReference type="Gene3D" id="3.90.950.10">
    <property type="match status" value="1"/>
</dbReference>
<dbReference type="HAMAP" id="MF_00528">
    <property type="entry name" value="Maf"/>
    <property type="match status" value="1"/>
</dbReference>
<dbReference type="InterPro" id="IPR029001">
    <property type="entry name" value="ITPase-like_fam"/>
</dbReference>
<dbReference type="InterPro" id="IPR003697">
    <property type="entry name" value="Maf-like"/>
</dbReference>
<dbReference type="NCBIfam" id="TIGR00172">
    <property type="entry name" value="maf"/>
    <property type="match status" value="1"/>
</dbReference>
<dbReference type="PANTHER" id="PTHR43213">
    <property type="entry name" value="BIFUNCTIONAL DTTP/UTP PYROPHOSPHATASE/METHYLTRANSFERASE PROTEIN-RELATED"/>
    <property type="match status" value="1"/>
</dbReference>
<dbReference type="PANTHER" id="PTHR43213:SF5">
    <property type="entry name" value="BIFUNCTIONAL DTTP_UTP PYROPHOSPHATASE_METHYLTRANSFERASE PROTEIN-RELATED"/>
    <property type="match status" value="1"/>
</dbReference>
<dbReference type="Pfam" id="PF02545">
    <property type="entry name" value="Maf"/>
    <property type="match status" value="1"/>
</dbReference>
<dbReference type="PIRSF" id="PIRSF006305">
    <property type="entry name" value="Maf"/>
    <property type="match status" value="1"/>
</dbReference>
<dbReference type="SUPFAM" id="SSF52972">
    <property type="entry name" value="ITPase-like"/>
    <property type="match status" value="1"/>
</dbReference>
<accession>Q1H156</accession>
<evidence type="ECO:0000255" key="1">
    <source>
        <dbReference type="HAMAP-Rule" id="MF_00528"/>
    </source>
</evidence>
<name>NTPPB_METFK</name>
<comment type="function">
    <text evidence="1">Nucleoside triphosphate pyrophosphatase that hydrolyzes 7-methyl-GTP (m(7)GTP). May have a dual role in cell division arrest and in preventing the incorporation of modified nucleotides into cellular nucleic acids.</text>
</comment>
<comment type="catalytic activity">
    <reaction evidence="1">
        <text>N(7)-methyl-GTP + H2O = N(7)-methyl-GMP + diphosphate + H(+)</text>
        <dbReference type="Rhea" id="RHEA:58744"/>
        <dbReference type="ChEBI" id="CHEBI:15377"/>
        <dbReference type="ChEBI" id="CHEBI:15378"/>
        <dbReference type="ChEBI" id="CHEBI:33019"/>
        <dbReference type="ChEBI" id="CHEBI:58285"/>
        <dbReference type="ChEBI" id="CHEBI:87133"/>
    </reaction>
</comment>
<comment type="cofactor">
    <cofactor evidence="1">
        <name>a divalent metal cation</name>
        <dbReference type="ChEBI" id="CHEBI:60240"/>
    </cofactor>
</comment>
<comment type="subcellular location">
    <subcellularLocation>
        <location evidence="1">Cytoplasm</location>
    </subcellularLocation>
</comment>
<comment type="similarity">
    <text evidence="1">Belongs to the Maf family. YceF subfamily.</text>
</comment>